<reference key="1">
    <citation type="journal article" date="1991" name="Virology">
        <title>Nucleotide sequence and genome organization of the murine polyomavirus, Kilham strain.</title>
        <authorList>
            <person name="Mayer M."/>
            <person name="Doerries K."/>
        </authorList>
    </citation>
    <scope>NUCLEOTIDE SEQUENCE [GENOMIC DNA]</scope>
</reference>
<comment type="function">
    <text evidence="1">Isoform large T antigen is a key early protein essential for both driving viral replication and inducing cellular transformation. Plays a role in viral genome replication by driving entry of quiescent cells into the cell cycle and by autoregulating the synthesis of viral early mRNA. Displays highly oncogenic activities by corrupting the host cellular checkpoint mechanisms that guard cell division and the transcription, replication, and repair of DNA. Participates in the modulation of cellular gene expression preceeding viral DNA replication. This step involves binding to host key cell cycle regulators retinoblastoma protein RB1/pRb and TP53. Induces the disassembly of host E2F1 transcription factors from RB1, thus promoting transcriptional activation of E2F1-regulated S-phase genes. Inhibits host TP53 binding to DNA, abrogating the ability of TP53 to stimulate gene expression. Plays the role of a TFIID-associated factor (TAF) in transcription initiation for all three RNA polymerases, by stabilizing the TBP-TFIIA complex on promoters. Initiates viral DNA replication and unwinding via interactions with the viral origin of replication. Binds two adjacent sites in the SV40 origin. The replication fork movement is facilitated by Large T antigen helicase activity. Has processive 3'-5' DNA helicase activity which requires a short 3' single-stranded region and ATP. Activates the transcription of viral late mRNA, through host TBP and TFIIA stabilization. Interferes with histone deacetylation mediated by HDAC1, leading to activation of transcription.</text>
</comment>
<comment type="catalytic activity">
    <reaction evidence="1">
        <text>Couples ATP hydrolysis with the unwinding of duplex DNA by translocating in the 3'-5' direction.</text>
        <dbReference type="EC" id="5.6.2.4"/>
    </reaction>
</comment>
<comment type="catalytic activity">
    <reaction evidence="1">
        <text>ATP + H2O = ADP + phosphate + H(+)</text>
        <dbReference type="Rhea" id="RHEA:13065"/>
        <dbReference type="ChEBI" id="CHEBI:15377"/>
        <dbReference type="ChEBI" id="CHEBI:15378"/>
        <dbReference type="ChEBI" id="CHEBI:30616"/>
        <dbReference type="ChEBI" id="CHEBI:43474"/>
        <dbReference type="ChEBI" id="CHEBI:456216"/>
        <dbReference type="EC" id="5.6.2.4"/>
    </reaction>
</comment>
<comment type="cofactor">
    <cofactor evidence="1">
        <name>Mg(2+)</name>
        <dbReference type="ChEBI" id="CHEBI:18420"/>
    </cofactor>
    <text evidence="1">DNA helicase activity requires Mg(2+).</text>
</comment>
<comment type="subunit">
    <text evidence="1">Forms homohexamers in the presence of ATP. Interacts with host HDAC1. Interacts (via LXCXE domain) with host RB1; the interaction induces the aberrant dissociation of RB1-E2F1 complex thereby disrupting RB1's activity. Interacts (via LXCXE domain) with host pRB-related proteins RBL1 and RBL2. Interacts (via C-terminus) with host TOP1 and POLA1 allowing DNA replication. Interacts with host preinitiation complex components TBP, TFIIA and TFIID to regulate transcription initiation.</text>
</comment>
<comment type="subcellular location">
    <subcellularLocation>
        <location evidence="1">Host nucleus</location>
    </subcellularLocation>
</comment>
<comment type="alternative products">
    <event type="alternative splicing"/>
    <isoform>
        <id>P24597-1</id>
        <name>Large T antigen</name>
        <sequence type="displayed"/>
    </isoform>
    <isoform>
        <id>P24598-1</id>
        <name>Small t antigen</name>
        <sequence type="external"/>
    </isoform>
</comment>
<comment type="domain">
    <text evidence="1">The J domain is essential for multiple viral activities, including virion assembly, viral DNA replication, transformation and transcriptional activation.</text>
</comment>
<comment type="domain">
    <text evidence="1">The LXCXE motif specifically binds to host pRB, RBL1, and RBL2.</text>
</comment>
<comment type="domain">
    <text evidence="1">The zinc finger region contributes to protein-protein interactions essential for the assembly of stable T-antigen hexamers at the origin of replication. The hexamers are required for subsequent alterations in the structure of origin DNA.</text>
</comment>
<comment type="domain">
    <text evidence="1">The ATP binding/ATPase domain is required for proper hexamer assembly and helicase activity.</text>
</comment>
<comment type="PTM">
    <text evidence="1">Phosphorylated on both serine and threonine residues. Small t antigen inhibits the dephosphorylation by the AC form of PP2A.</text>
</comment>
<comment type="PTM">
    <text evidence="1">O-Glycosylated near the C-terminal region.</text>
</comment>
<comment type="PTM">
    <text evidence="1">Acetylated by CBP in a TP53-dependent manner.</text>
</comment>
<dbReference type="EC" id="5.6.2.4" evidence="1"/>
<dbReference type="EMBL" id="M55904">
    <property type="protein sequence ID" value="AAA46551.1"/>
    <property type="molecule type" value="Genomic_DNA"/>
</dbReference>
<dbReference type="PIR" id="A37945">
    <property type="entry name" value="TVVPMK"/>
</dbReference>
<dbReference type="RefSeq" id="NP_041232.1">
    <property type="nucleotide sequence ID" value="NC_001505.2"/>
</dbReference>
<dbReference type="SMR" id="P24597"/>
<dbReference type="GeneID" id="29031024"/>
<dbReference type="KEGG" id="vg:29031024"/>
<dbReference type="Proteomes" id="UP000106006">
    <property type="component" value="Segment"/>
</dbReference>
<dbReference type="GO" id="GO:0042025">
    <property type="term" value="C:host cell nucleus"/>
    <property type="evidence" value="ECO:0007669"/>
    <property type="project" value="UniProtKB-SubCell"/>
</dbReference>
<dbReference type="GO" id="GO:0005524">
    <property type="term" value="F:ATP binding"/>
    <property type="evidence" value="ECO:0007669"/>
    <property type="project" value="UniProtKB-KW"/>
</dbReference>
<dbReference type="GO" id="GO:0016887">
    <property type="term" value="F:ATP hydrolysis activity"/>
    <property type="evidence" value="ECO:0007669"/>
    <property type="project" value="RHEA"/>
</dbReference>
<dbReference type="GO" id="GO:0003688">
    <property type="term" value="F:DNA replication origin binding"/>
    <property type="evidence" value="ECO:0007669"/>
    <property type="project" value="InterPro"/>
</dbReference>
<dbReference type="GO" id="GO:0004386">
    <property type="term" value="F:helicase activity"/>
    <property type="evidence" value="ECO:0007669"/>
    <property type="project" value="UniProtKB-KW"/>
</dbReference>
<dbReference type="GO" id="GO:0008270">
    <property type="term" value="F:zinc ion binding"/>
    <property type="evidence" value="ECO:0007669"/>
    <property type="project" value="UniProtKB-KW"/>
</dbReference>
<dbReference type="GO" id="GO:0006260">
    <property type="term" value="P:DNA replication"/>
    <property type="evidence" value="ECO:0007669"/>
    <property type="project" value="UniProtKB-KW"/>
</dbReference>
<dbReference type="GO" id="GO:0039645">
    <property type="term" value="P:symbiont-mediated perturbation of host cell cycle G1/S transition checkpoint"/>
    <property type="evidence" value="ECO:0007669"/>
    <property type="project" value="UniProtKB-KW"/>
</dbReference>
<dbReference type="GO" id="GO:0052170">
    <property type="term" value="P:symbiont-mediated suppression of host innate immune response"/>
    <property type="evidence" value="ECO:0007669"/>
    <property type="project" value="UniProtKB-KW"/>
</dbReference>
<dbReference type="GO" id="GO:0039576">
    <property type="term" value="P:symbiont-mediated suppression of host JAK-STAT cascade via inhibition of JAK1 activity"/>
    <property type="evidence" value="ECO:0007669"/>
    <property type="project" value="UniProtKB-KW"/>
</dbReference>
<dbReference type="GO" id="GO:0039502">
    <property type="term" value="P:symbiont-mediated suppression of host type I interferon-mediated signaling pathway"/>
    <property type="evidence" value="ECO:0007669"/>
    <property type="project" value="UniProtKB-KW"/>
</dbReference>
<dbReference type="Gene3D" id="3.40.1310.20">
    <property type="match status" value="1"/>
</dbReference>
<dbReference type="Gene3D" id="1.10.287.110">
    <property type="entry name" value="DnaJ domain"/>
    <property type="match status" value="1"/>
</dbReference>
<dbReference type="Gene3D" id="1.20.1050.70">
    <property type="entry name" value="Large T antigen, SV40, domain 3"/>
    <property type="match status" value="1"/>
</dbReference>
<dbReference type="Gene3D" id="3.40.50.300">
    <property type="entry name" value="P-loop containing nucleotide triphosphate hydrolases"/>
    <property type="match status" value="1"/>
</dbReference>
<dbReference type="Gene3D" id="1.10.10.510">
    <property type="entry name" value="Zinc finger, large T-antigen D1 domain"/>
    <property type="match status" value="1"/>
</dbReference>
<dbReference type="InterPro" id="IPR001623">
    <property type="entry name" value="DnaJ_domain"/>
</dbReference>
<dbReference type="InterPro" id="IPR014015">
    <property type="entry name" value="Helicase_SF3_DNA-vir"/>
</dbReference>
<dbReference type="InterPro" id="IPR036869">
    <property type="entry name" value="J_dom_sf"/>
</dbReference>
<dbReference type="InterPro" id="IPR016392">
    <property type="entry name" value="Lg_T_Ag_polyomavir"/>
</dbReference>
<dbReference type="InterPro" id="IPR010932">
    <property type="entry name" value="Lg_T_Ag_Polyomavir_C"/>
</dbReference>
<dbReference type="InterPro" id="IPR027417">
    <property type="entry name" value="P-loop_NTPase"/>
</dbReference>
<dbReference type="InterPro" id="IPR003133">
    <property type="entry name" value="T_Ag_DNA-bd"/>
</dbReference>
<dbReference type="InterPro" id="IPR017910">
    <property type="entry name" value="Znf_lg_T-Ag_D1-typ"/>
</dbReference>
<dbReference type="InterPro" id="IPR037102">
    <property type="entry name" value="Znf_lg_T-Ag_D1_dom_sf"/>
</dbReference>
<dbReference type="Pfam" id="PF06431">
    <property type="entry name" value="Polyoma_lg_T_C"/>
    <property type="match status" value="1"/>
</dbReference>
<dbReference type="Pfam" id="PF02217">
    <property type="entry name" value="T_Ag_DNA_bind"/>
    <property type="match status" value="1"/>
</dbReference>
<dbReference type="PIRSF" id="PIRSF003368">
    <property type="entry name" value="Large_T_antigen_polyomaV"/>
    <property type="match status" value="1"/>
</dbReference>
<dbReference type="SMART" id="SM00271">
    <property type="entry name" value="DnaJ"/>
    <property type="match status" value="1"/>
</dbReference>
<dbReference type="SUPFAM" id="SSF46565">
    <property type="entry name" value="Chaperone J-domain"/>
    <property type="match status" value="1"/>
</dbReference>
<dbReference type="SUPFAM" id="SSF55464">
    <property type="entry name" value="Origin of replication-binding domain, RBD-like"/>
    <property type="match status" value="1"/>
</dbReference>
<dbReference type="SUPFAM" id="SSF52540">
    <property type="entry name" value="P-loop containing nucleoside triphosphate hydrolases"/>
    <property type="match status" value="1"/>
</dbReference>
<dbReference type="PROSITE" id="PS51206">
    <property type="entry name" value="SF3_HELICASE_1"/>
    <property type="match status" value="1"/>
</dbReference>
<dbReference type="PROSITE" id="PS51287">
    <property type="entry name" value="T_AG_OBD"/>
    <property type="match status" value="1"/>
</dbReference>
<dbReference type="PROSITE" id="PS51341">
    <property type="entry name" value="ZF_LTAG_D1"/>
    <property type="match status" value="1"/>
</dbReference>
<name>LT_POVMK</name>
<proteinExistence type="inferred from homology"/>
<protein>
    <recommendedName>
        <fullName>Large T antigen</fullName>
        <shortName>LT</shortName>
        <shortName>LT-AG</shortName>
        <ecNumber evidence="1">5.6.2.4</ecNumber>
    </recommendedName>
    <alternativeName>
        <fullName evidence="6">DNA 3'-5' helicase large T antigen</fullName>
    </alternativeName>
</protein>
<keyword id="KW-0007">Acetylation</keyword>
<keyword id="KW-0025">Alternative splicing</keyword>
<keyword id="KW-0067">ATP-binding</keyword>
<keyword id="KW-0235">DNA replication</keyword>
<keyword id="KW-0238">DNA-binding</keyword>
<keyword id="KW-0244">Early protein</keyword>
<keyword id="KW-1078">G1/S host cell cycle checkpoint dysregulation by virus</keyword>
<keyword id="KW-0347">Helicase</keyword>
<keyword id="KW-1048">Host nucleus</keyword>
<keyword id="KW-0945">Host-virus interaction</keyword>
<keyword id="KW-0378">Hydrolase</keyword>
<keyword id="KW-1090">Inhibition of host innate immune response by virus</keyword>
<keyword id="KW-1114">Inhibition of host interferon signaling pathway by virus</keyword>
<keyword id="KW-1096">Inhibition of host JAK1 by virus</keyword>
<keyword id="KW-0922">Interferon antiviral system evasion</keyword>
<keyword id="KW-0413">Isomerase</keyword>
<keyword id="KW-0460">Magnesium</keyword>
<keyword id="KW-0479">Metal-binding</keyword>
<keyword id="KW-1121">Modulation of host cell cycle by virus</keyword>
<keyword id="KW-0547">Nucleotide-binding</keyword>
<keyword id="KW-0553">Oncogene</keyword>
<keyword id="KW-0597">Phosphoprotein</keyword>
<keyword id="KW-0899">Viral immunoevasion</keyword>
<keyword id="KW-0862">Zinc</keyword>
<keyword id="KW-0863">Zinc-finger</keyword>
<evidence type="ECO:0000250" key="1">
    <source>
        <dbReference type="UniProtKB" id="P03070"/>
    </source>
</evidence>
<evidence type="ECO:0000255" key="2">
    <source>
        <dbReference type="PROSITE-ProRule" id="PRU00551"/>
    </source>
</evidence>
<evidence type="ECO:0000255" key="3">
    <source>
        <dbReference type="PROSITE-ProRule" id="PRU00620"/>
    </source>
</evidence>
<evidence type="ECO:0000255" key="4">
    <source>
        <dbReference type="PROSITE-ProRule" id="PRU00671"/>
    </source>
</evidence>
<evidence type="ECO:0000256" key="5">
    <source>
        <dbReference type="SAM" id="MobiDB-lite"/>
    </source>
</evidence>
<evidence type="ECO:0000305" key="6"/>
<organism>
    <name type="scientific">Murine polyomavirus (strain Kilham)</name>
    <name type="common">MPyV</name>
    <name type="synonym">Murine pneumotropic virus</name>
    <dbReference type="NCBI Taxonomy" id="10638"/>
    <lineage>
        <taxon>Viruses</taxon>
        <taxon>Monodnaviria</taxon>
        <taxon>Shotokuvirae</taxon>
        <taxon>Cossaviricota</taxon>
        <taxon>Papovaviricetes</taxon>
        <taxon>Sepolyvirales</taxon>
        <taxon>Polyomaviridae</taxon>
        <taxon>Betapolyomavirus</taxon>
        <taxon>Betapolyomavirus secumuris</taxon>
    </lineage>
</organism>
<organismHost>
    <name type="scientific">Mus musculus</name>
    <name type="common">Mouse</name>
    <dbReference type="NCBI Taxonomy" id="10090"/>
</organismHost>
<feature type="chain" id="PRO_0000115045" description="Large T antigen">
    <location>
        <begin position="1"/>
        <end position="648"/>
    </location>
</feature>
<feature type="domain" description="J">
    <location>
        <begin position="12"/>
        <end position="75"/>
    </location>
</feature>
<feature type="domain" description="SF3 helicase" evidence="2">
    <location>
        <begin position="418"/>
        <end position="573"/>
    </location>
</feature>
<feature type="DNA-binding region" description="T-ag OBD" evidence="3">
    <location>
        <begin position="154"/>
        <end position="272"/>
    </location>
</feature>
<feature type="zinc finger region" description="T-ag D1-type" evidence="4">
    <location>
        <begin position="281"/>
        <end position="373"/>
    </location>
</feature>
<feature type="region of interest" description="Disordered" evidence="5">
    <location>
        <begin position="112"/>
        <end position="149"/>
    </location>
</feature>
<feature type="short sequence motif" description="LXCXE motif" evidence="1">
    <location>
        <begin position="103"/>
        <end position="107"/>
    </location>
</feature>
<feature type="short sequence motif" description="Nuclear localization signal" evidence="1">
    <location>
        <begin position="140"/>
        <end position="147"/>
    </location>
</feature>
<feature type="binding site" evidence="4">
    <location>
        <position position="318"/>
    </location>
    <ligand>
        <name>Zn(2+)</name>
        <dbReference type="ChEBI" id="CHEBI:29105"/>
    </ligand>
</feature>
<feature type="binding site" evidence="4">
    <location>
        <position position="321"/>
    </location>
    <ligand>
        <name>Zn(2+)</name>
        <dbReference type="ChEBI" id="CHEBI:29105"/>
    </ligand>
</feature>
<feature type="binding site" evidence="4">
    <location>
        <position position="329"/>
    </location>
    <ligand>
        <name>Zn(2+)</name>
        <dbReference type="ChEBI" id="CHEBI:29105"/>
    </ligand>
</feature>
<feature type="binding site" evidence="4">
    <location>
        <position position="333"/>
    </location>
    <ligand>
        <name>Zn(2+)</name>
        <dbReference type="ChEBI" id="CHEBI:29105"/>
    </ligand>
</feature>
<feature type="binding site" evidence="2">
    <location>
        <begin position="444"/>
        <end position="451"/>
    </location>
    <ligand>
        <name>ATP</name>
        <dbReference type="ChEBI" id="CHEBI:30616"/>
    </ligand>
</feature>
<feature type="modified residue" description="N-acetylmethionine; by host" evidence="1">
    <location>
        <position position="1"/>
    </location>
</feature>
<feature type="modified residue" description="Phosphoserine; by host" evidence="1">
    <location>
        <position position="112"/>
    </location>
</feature>
<feature type="modified residue" description="Phosphothreonine; by host" evidence="1">
    <location>
        <position position="139"/>
    </location>
</feature>
<accession>P24597</accession>
<sequence length="648" mass="74708">MDHQLTREESQRLMHLLKLPMEQYGNFPLMRKAFLRACKIVHPDKGGSDELSQELISLYRRLEESLPCLSTQDFIETDILQIPSYGTPEWDEWWKEFNKDFDLFCNEAFDRSDDEQEPQPDDSAPIILSPTYPARSQATPPKKKAKMDSPNDMPADLMEYLSCAILSNKTLPCFLIYTTLEKVELLYNKLSEEVLSPRFNQVDHKYGRKYVPIFIITGTKHRVSAVFNYCATYCSVSFIVVKGVIKEYPLYCHLCVEPYSVLQESIEELNSEFFDAPEDAAKNVNWVAISEYALKINCDDIYLLMGLYKEFQSPVPNCSKCENRMLTNHFKFHKEHHENAFYLQLVENQKTICQQAVDGVIATKTVDMAQMTRNEQLAARFDKLFERLEVILSAQSSYTISMFMAGIVWFENLFPGQSFKDLLLELLECMVSNIPKRRYWLFTGPVNTGKTTLAAAVLDLGGTIYISDCYLIELEVANSQIHGCVEVLAEKVKIRLPPGQGINNLDNLRDHLDGAVKVNLEKKHLNKKTQIFPPGIVTSNEYFIPFTLRVRFCKKLVFKFSKYQYLSLKKTECLGRYRILQNGCTLLLLLIYHCDLDDFAESIQGKVRAWKERVNSEISVSTYLEMRQCCLEGRYSVCTKYSNANTAQ</sequence>